<organism>
    <name type="scientific">Shewanella denitrificans (strain OS217 / ATCC BAA-1090 / DSM 15013)</name>
    <dbReference type="NCBI Taxonomy" id="318161"/>
    <lineage>
        <taxon>Bacteria</taxon>
        <taxon>Pseudomonadati</taxon>
        <taxon>Pseudomonadota</taxon>
        <taxon>Gammaproteobacteria</taxon>
        <taxon>Alteromonadales</taxon>
        <taxon>Shewanellaceae</taxon>
        <taxon>Shewanella</taxon>
    </lineage>
</organism>
<reference key="1">
    <citation type="submission" date="2006-03" db="EMBL/GenBank/DDBJ databases">
        <title>Complete sequence of Shewanella denitrificans OS217.</title>
        <authorList>
            <consortium name="US DOE Joint Genome Institute"/>
            <person name="Copeland A."/>
            <person name="Lucas S."/>
            <person name="Lapidus A."/>
            <person name="Barry K."/>
            <person name="Detter J.C."/>
            <person name="Glavina del Rio T."/>
            <person name="Hammon N."/>
            <person name="Israni S."/>
            <person name="Dalin E."/>
            <person name="Tice H."/>
            <person name="Pitluck S."/>
            <person name="Brettin T."/>
            <person name="Bruce D."/>
            <person name="Han C."/>
            <person name="Tapia R."/>
            <person name="Gilna P."/>
            <person name="Kiss H."/>
            <person name="Schmutz J."/>
            <person name="Larimer F."/>
            <person name="Land M."/>
            <person name="Hauser L."/>
            <person name="Kyrpides N."/>
            <person name="Lykidis A."/>
            <person name="Richardson P."/>
        </authorList>
    </citation>
    <scope>NUCLEOTIDE SEQUENCE [LARGE SCALE GENOMIC DNA]</scope>
    <source>
        <strain>OS217 / ATCC BAA-1090 / DSM 15013</strain>
    </source>
</reference>
<comment type="function">
    <text evidence="1">Phosphorolytic 3'-5' exoribonuclease that plays an important role in tRNA 3'-end maturation. Removes nucleotide residues following the 3'-CCA terminus of tRNAs; can also add nucleotides to the ends of RNA molecules by using nucleoside diphosphates as substrates, but this may not be physiologically important. Probably plays a role in initiation of 16S rRNA degradation (leading to ribosome degradation) during starvation.</text>
</comment>
<comment type="catalytic activity">
    <reaction evidence="1">
        <text>tRNA(n+1) + phosphate = tRNA(n) + a ribonucleoside 5'-diphosphate</text>
        <dbReference type="Rhea" id="RHEA:10628"/>
        <dbReference type="Rhea" id="RHEA-COMP:17343"/>
        <dbReference type="Rhea" id="RHEA-COMP:17344"/>
        <dbReference type="ChEBI" id="CHEBI:43474"/>
        <dbReference type="ChEBI" id="CHEBI:57930"/>
        <dbReference type="ChEBI" id="CHEBI:173114"/>
        <dbReference type="EC" id="2.7.7.56"/>
    </reaction>
</comment>
<comment type="subunit">
    <text evidence="1">Homohexameric ring arranged as a trimer of dimers.</text>
</comment>
<comment type="similarity">
    <text evidence="1">Belongs to the RNase PH family.</text>
</comment>
<name>RNPH_SHEDO</name>
<proteinExistence type="inferred from homology"/>
<evidence type="ECO:0000255" key="1">
    <source>
        <dbReference type="HAMAP-Rule" id="MF_00564"/>
    </source>
</evidence>
<feature type="chain" id="PRO_1000024881" description="Ribonuclease PH">
    <location>
        <begin position="1"/>
        <end position="237"/>
    </location>
</feature>
<feature type="binding site" evidence="1">
    <location>
        <position position="86"/>
    </location>
    <ligand>
        <name>phosphate</name>
        <dbReference type="ChEBI" id="CHEBI:43474"/>
        <note>substrate</note>
    </ligand>
</feature>
<feature type="binding site" evidence="1">
    <location>
        <begin position="124"/>
        <end position="126"/>
    </location>
    <ligand>
        <name>phosphate</name>
        <dbReference type="ChEBI" id="CHEBI:43474"/>
        <note>substrate</note>
    </ligand>
</feature>
<dbReference type="EC" id="2.7.7.56" evidence="1"/>
<dbReference type="EMBL" id="CP000302">
    <property type="protein sequence ID" value="ABE53614.1"/>
    <property type="molecule type" value="Genomic_DNA"/>
</dbReference>
<dbReference type="RefSeq" id="WP_011494781.1">
    <property type="nucleotide sequence ID" value="NC_007954.1"/>
</dbReference>
<dbReference type="SMR" id="Q12SG2"/>
<dbReference type="STRING" id="318161.Sden_0319"/>
<dbReference type="KEGG" id="sdn:Sden_0319"/>
<dbReference type="eggNOG" id="COG0689">
    <property type="taxonomic scope" value="Bacteria"/>
</dbReference>
<dbReference type="HOGENOM" id="CLU_050858_0_0_6"/>
<dbReference type="OrthoDB" id="9802265at2"/>
<dbReference type="Proteomes" id="UP000001982">
    <property type="component" value="Chromosome"/>
</dbReference>
<dbReference type="GO" id="GO:0000175">
    <property type="term" value="F:3'-5'-RNA exonuclease activity"/>
    <property type="evidence" value="ECO:0007669"/>
    <property type="project" value="UniProtKB-UniRule"/>
</dbReference>
<dbReference type="GO" id="GO:0000049">
    <property type="term" value="F:tRNA binding"/>
    <property type="evidence" value="ECO:0007669"/>
    <property type="project" value="UniProtKB-UniRule"/>
</dbReference>
<dbReference type="GO" id="GO:0009022">
    <property type="term" value="F:tRNA nucleotidyltransferase activity"/>
    <property type="evidence" value="ECO:0007669"/>
    <property type="project" value="UniProtKB-UniRule"/>
</dbReference>
<dbReference type="GO" id="GO:0016075">
    <property type="term" value="P:rRNA catabolic process"/>
    <property type="evidence" value="ECO:0007669"/>
    <property type="project" value="UniProtKB-UniRule"/>
</dbReference>
<dbReference type="GO" id="GO:0006364">
    <property type="term" value="P:rRNA processing"/>
    <property type="evidence" value="ECO:0007669"/>
    <property type="project" value="UniProtKB-KW"/>
</dbReference>
<dbReference type="GO" id="GO:0008033">
    <property type="term" value="P:tRNA processing"/>
    <property type="evidence" value="ECO:0007669"/>
    <property type="project" value="UniProtKB-UniRule"/>
</dbReference>
<dbReference type="CDD" id="cd11362">
    <property type="entry name" value="RNase_PH_bact"/>
    <property type="match status" value="1"/>
</dbReference>
<dbReference type="FunFam" id="3.30.230.70:FF:000003">
    <property type="entry name" value="Ribonuclease PH"/>
    <property type="match status" value="1"/>
</dbReference>
<dbReference type="Gene3D" id="3.30.230.70">
    <property type="entry name" value="GHMP Kinase, N-terminal domain"/>
    <property type="match status" value="1"/>
</dbReference>
<dbReference type="HAMAP" id="MF_00564">
    <property type="entry name" value="RNase_PH"/>
    <property type="match status" value="1"/>
</dbReference>
<dbReference type="InterPro" id="IPR001247">
    <property type="entry name" value="ExoRNase_PH_dom1"/>
</dbReference>
<dbReference type="InterPro" id="IPR015847">
    <property type="entry name" value="ExoRNase_PH_dom2"/>
</dbReference>
<dbReference type="InterPro" id="IPR036345">
    <property type="entry name" value="ExoRNase_PH_dom2_sf"/>
</dbReference>
<dbReference type="InterPro" id="IPR027408">
    <property type="entry name" value="PNPase/RNase_PH_dom_sf"/>
</dbReference>
<dbReference type="InterPro" id="IPR020568">
    <property type="entry name" value="Ribosomal_Su5_D2-typ_SF"/>
</dbReference>
<dbReference type="InterPro" id="IPR050080">
    <property type="entry name" value="RNase_PH"/>
</dbReference>
<dbReference type="InterPro" id="IPR002381">
    <property type="entry name" value="RNase_PH_bac-type"/>
</dbReference>
<dbReference type="InterPro" id="IPR018336">
    <property type="entry name" value="RNase_PH_CS"/>
</dbReference>
<dbReference type="NCBIfam" id="TIGR01966">
    <property type="entry name" value="RNasePH"/>
    <property type="match status" value="1"/>
</dbReference>
<dbReference type="PANTHER" id="PTHR11953">
    <property type="entry name" value="EXOSOME COMPLEX COMPONENT"/>
    <property type="match status" value="1"/>
</dbReference>
<dbReference type="PANTHER" id="PTHR11953:SF0">
    <property type="entry name" value="EXOSOME COMPLEX COMPONENT RRP41"/>
    <property type="match status" value="1"/>
</dbReference>
<dbReference type="Pfam" id="PF01138">
    <property type="entry name" value="RNase_PH"/>
    <property type="match status" value="1"/>
</dbReference>
<dbReference type="Pfam" id="PF03725">
    <property type="entry name" value="RNase_PH_C"/>
    <property type="match status" value="1"/>
</dbReference>
<dbReference type="SUPFAM" id="SSF55666">
    <property type="entry name" value="Ribonuclease PH domain 2-like"/>
    <property type="match status" value="1"/>
</dbReference>
<dbReference type="SUPFAM" id="SSF54211">
    <property type="entry name" value="Ribosomal protein S5 domain 2-like"/>
    <property type="match status" value="1"/>
</dbReference>
<dbReference type="PROSITE" id="PS01277">
    <property type="entry name" value="RIBONUCLEASE_PH"/>
    <property type="match status" value="1"/>
</dbReference>
<protein>
    <recommendedName>
        <fullName evidence="1">Ribonuclease PH</fullName>
        <shortName evidence="1">RNase PH</shortName>
        <ecNumber evidence="1">2.7.7.56</ecNumber>
    </recommendedName>
    <alternativeName>
        <fullName evidence="1">tRNA nucleotidyltransferase</fullName>
    </alternativeName>
</protein>
<gene>
    <name evidence="1" type="primary">rph</name>
    <name type="ordered locus">Sden_0319</name>
</gene>
<keyword id="KW-0548">Nucleotidyltransferase</keyword>
<keyword id="KW-1185">Reference proteome</keyword>
<keyword id="KW-0694">RNA-binding</keyword>
<keyword id="KW-0698">rRNA processing</keyword>
<keyword id="KW-0808">Transferase</keyword>
<keyword id="KW-0819">tRNA processing</keyword>
<keyword id="KW-0820">tRNA-binding</keyword>
<accession>Q12SG2</accession>
<sequence>MRPSKRTPAQTRPITITRNFTAHAEGSVLVEFGETKVLCTASFTEGVPRFLKGQGQGWVTAEYGMLPRSTHSRMDREAARGKQSGRTQEIQRLIGRSLRAAVDMKALGENTIVIDCDVIQADGGTRTAAITGACVAMVDALNWARAKNIIKSNPLKFLIAAVSVGIYKGEAISDLEYLEDSAAETDMNVVMTETGKIIEVQGTAEGEPFSHEELNELLGLAKNSIREIVDVQKSALN</sequence>